<reference key="1">
    <citation type="submission" date="2008-08" db="EMBL/GenBank/DDBJ databases">
        <title>Complete sequence of Acidithiobacillus ferrooxidans ATCC 53993.</title>
        <authorList>
            <person name="Lucas S."/>
            <person name="Copeland A."/>
            <person name="Lapidus A."/>
            <person name="Glavina del Rio T."/>
            <person name="Dalin E."/>
            <person name="Tice H."/>
            <person name="Bruce D."/>
            <person name="Goodwin L."/>
            <person name="Pitluck S."/>
            <person name="Sims D."/>
            <person name="Brettin T."/>
            <person name="Detter J.C."/>
            <person name="Han C."/>
            <person name="Kuske C.R."/>
            <person name="Larimer F."/>
            <person name="Land M."/>
            <person name="Hauser L."/>
            <person name="Kyrpides N."/>
            <person name="Lykidis A."/>
            <person name="Borole A.P."/>
        </authorList>
    </citation>
    <scope>NUCLEOTIDE SEQUENCE [LARGE SCALE GENOMIC DNA]</scope>
    <source>
        <strain>ATCC 53993 / BNL-5-31</strain>
    </source>
</reference>
<dbReference type="EMBL" id="CP001132">
    <property type="protein sequence ID" value="ACH84766.1"/>
    <property type="molecule type" value="Genomic_DNA"/>
</dbReference>
<dbReference type="RefSeq" id="WP_009564008.1">
    <property type="nucleotide sequence ID" value="NC_011206.1"/>
</dbReference>
<dbReference type="SMR" id="B5EPX1"/>
<dbReference type="KEGG" id="afe:Lferr_2572"/>
<dbReference type="eggNOG" id="COG2924">
    <property type="taxonomic scope" value="Bacteria"/>
</dbReference>
<dbReference type="HOGENOM" id="CLU_170994_0_0_6"/>
<dbReference type="GO" id="GO:0005829">
    <property type="term" value="C:cytosol"/>
    <property type="evidence" value="ECO:0007669"/>
    <property type="project" value="TreeGrafter"/>
</dbReference>
<dbReference type="GO" id="GO:0005506">
    <property type="term" value="F:iron ion binding"/>
    <property type="evidence" value="ECO:0007669"/>
    <property type="project" value="UniProtKB-UniRule"/>
</dbReference>
<dbReference type="GO" id="GO:0034599">
    <property type="term" value="P:cellular response to oxidative stress"/>
    <property type="evidence" value="ECO:0007669"/>
    <property type="project" value="TreeGrafter"/>
</dbReference>
<dbReference type="FunFam" id="1.10.3880.10:FF:000001">
    <property type="entry name" value="Probable Fe(2+)-trafficking protein"/>
    <property type="match status" value="1"/>
</dbReference>
<dbReference type="Gene3D" id="1.10.3880.10">
    <property type="entry name" value="Fe(II) trafficking protein YggX"/>
    <property type="match status" value="1"/>
</dbReference>
<dbReference type="HAMAP" id="MF_00686">
    <property type="entry name" value="Fe_traffic_YggX"/>
    <property type="match status" value="1"/>
</dbReference>
<dbReference type="InterPro" id="IPR007457">
    <property type="entry name" value="Fe_traffick_prot_YggX"/>
</dbReference>
<dbReference type="InterPro" id="IPR036766">
    <property type="entry name" value="Fe_traffick_prot_YggX_sf"/>
</dbReference>
<dbReference type="NCBIfam" id="NF003817">
    <property type="entry name" value="PRK05408.1"/>
    <property type="match status" value="1"/>
</dbReference>
<dbReference type="PANTHER" id="PTHR36965">
    <property type="entry name" value="FE(2+)-TRAFFICKING PROTEIN-RELATED"/>
    <property type="match status" value="1"/>
</dbReference>
<dbReference type="PANTHER" id="PTHR36965:SF1">
    <property type="entry name" value="FE(2+)-TRAFFICKING PROTEIN-RELATED"/>
    <property type="match status" value="1"/>
</dbReference>
<dbReference type="Pfam" id="PF04362">
    <property type="entry name" value="Iron_traffic"/>
    <property type="match status" value="1"/>
</dbReference>
<dbReference type="PIRSF" id="PIRSF029827">
    <property type="entry name" value="Fe_traffic_YggX"/>
    <property type="match status" value="1"/>
</dbReference>
<dbReference type="SUPFAM" id="SSF111148">
    <property type="entry name" value="YggX-like"/>
    <property type="match status" value="1"/>
</dbReference>
<name>FETP_ACIF5</name>
<keyword id="KW-0408">Iron</keyword>
<feature type="chain" id="PRO_1000131822" description="Probable Fe(2+)-trafficking protein">
    <location>
        <begin position="1"/>
        <end position="93"/>
    </location>
</feature>
<evidence type="ECO:0000255" key="1">
    <source>
        <dbReference type="HAMAP-Rule" id="MF_00686"/>
    </source>
</evidence>
<proteinExistence type="inferred from homology"/>
<accession>B5EPX1</accession>
<sequence>MSRMVQCVKLGHEAEGLDRPPYPGALGARIYQEVSKEAWQGWLKHQTMLINEYRLSPIDPKSRTFLEKQMEAYFFGDGAQSPEGYVPPAPQDS</sequence>
<gene>
    <name type="ordered locus">Lferr_2572</name>
</gene>
<protein>
    <recommendedName>
        <fullName evidence="1">Probable Fe(2+)-trafficking protein</fullName>
    </recommendedName>
</protein>
<organism>
    <name type="scientific">Acidithiobacillus ferrooxidans (strain ATCC 53993 / BNL-5-31)</name>
    <name type="common">Leptospirillum ferrooxidans (ATCC 53993)</name>
    <dbReference type="NCBI Taxonomy" id="380394"/>
    <lineage>
        <taxon>Bacteria</taxon>
        <taxon>Pseudomonadati</taxon>
        <taxon>Pseudomonadota</taxon>
        <taxon>Acidithiobacillia</taxon>
        <taxon>Acidithiobacillales</taxon>
        <taxon>Acidithiobacillaceae</taxon>
        <taxon>Acidithiobacillus</taxon>
    </lineage>
</organism>
<comment type="function">
    <text evidence="1">Could be a mediator in iron transactions between iron acquisition and iron-requiring processes, such as synthesis and/or repair of Fe-S clusters in biosynthetic enzymes.</text>
</comment>
<comment type="similarity">
    <text evidence="1">Belongs to the Fe(2+)-trafficking protein family.</text>
</comment>